<feature type="chain" id="PRO_1000048741" description="Chromosomal replication initiator protein DnaA">
    <location>
        <begin position="1"/>
        <end position="451"/>
    </location>
</feature>
<feature type="region of interest" description="Domain I, interacts with DnaA modulators" evidence="1">
    <location>
        <begin position="1"/>
        <end position="77"/>
    </location>
</feature>
<feature type="region of interest" description="Domain II" evidence="1">
    <location>
        <begin position="77"/>
        <end position="110"/>
    </location>
</feature>
<feature type="region of interest" description="Domain III, AAA+ region" evidence="1">
    <location>
        <begin position="111"/>
        <end position="329"/>
    </location>
</feature>
<feature type="region of interest" description="Domain IV, binds dsDNA" evidence="1">
    <location>
        <begin position="330"/>
        <end position="451"/>
    </location>
</feature>
<feature type="binding site" evidence="1">
    <location>
        <position position="155"/>
    </location>
    <ligand>
        <name>ATP</name>
        <dbReference type="ChEBI" id="CHEBI:30616"/>
    </ligand>
</feature>
<feature type="binding site" evidence="1">
    <location>
        <position position="157"/>
    </location>
    <ligand>
        <name>ATP</name>
        <dbReference type="ChEBI" id="CHEBI:30616"/>
    </ligand>
</feature>
<feature type="binding site" evidence="1">
    <location>
        <position position="158"/>
    </location>
    <ligand>
        <name>ATP</name>
        <dbReference type="ChEBI" id="CHEBI:30616"/>
    </ligand>
</feature>
<feature type="binding site" evidence="1">
    <location>
        <position position="159"/>
    </location>
    <ligand>
        <name>ATP</name>
        <dbReference type="ChEBI" id="CHEBI:30616"/>
    </ligand>
</feature>
<keyword id="KW-0067">ATP-binding</keyword>
<keyword id="KW-0963">Cytoplasm</keyword>
<keyword id="KW-0235">DNA replication</keyword>
<keyword id="KW-0238">DNA-binding</keyword>
<keyword id="KW-0446">Lipid-binding</keyword>
<keyword id="KW-0547">Nucleotide-binding</keyword>
<reference key="1">
    <citation type="journal article" date="2006" name="Proc. Natl. Acad. Sci. U.S.A.">
        <title>Molecular genetic anatomy of inter- and intraserotype variation in the human bacterial pathogen group A Streptococcus.</title>
        <authorList>
            <person name="Beres S.B."/>
            <person name="Richter E.W."/>
            <person name="Nagiec M.J."/>
            <person name="Sumby P."/>
            <person name="Porcella S.F."/>
            <person name="DeLeo F.R."/>
            <person name="Musser J.M."/>
        </authorList>
    </citation>
    <scope>NUCLEOTIDE SEQUENCE [LARGE SCALE GENOMIC DNA]</scope>
    <source>
        <strain>MGAS10270</strain>
    </source>
</reference>
<proteinExistence type="inferred from homology"/>
<accession>Q1JJA7</accession>
<protein>
    <recommendedName>
        <fullName evidence="1">Chromosomal replication initiator protein DnaA</fullName>
    </recommendedName>
</protein>
<organism>
    <name type="scientific">Streptococcus pyogenes serotype M2 (strain MGAS10270)</name>
    <dbReference type="NCBI Taxonomy" id="370552"/>
    <lineage>
        <taxon>Bacteria</taxon>
        <taxon>Bacillati</taxon>
        <taxon>Bacillota</taxon>
        <taxon>Bacilli</taxon>
        <taxon>Lactobacillales</taxon>
        <taxon>Streptococcaceae</taxon>
        <taxon>Streptococcus</taxon>
    </lineage>
</organism>
<dbReference type="EMBL" id="CP000260">
    <property type="protein sequence ID" value="ABF33066.1"/>
    <property type="molecule type" value="Genomic_DNA"/>
</dbReference>
<dbReference type="RefSeq" id="WP_002987659.1">
    <property type="nucleotide sequence ID" value="NZ_CVUH01000001.1"/>
</dbReference>
<dbReference type="SMR" id="Q1JJA7"/>
<dbReference type="GeneID" id="69899953"/>
<dbReference type="KEGG" id="sph:MGAS10270_Spy0001"/>
<dbReference type="HOGENOM" id="CLU_026910_3_2_9"/>
<dbReference type="Proteomes" id="UP000002436">
    <property type="component" value="Chromosome"/>
</dbReference>
<dbReference type="GO" id="GO:0005737">
    <property type="term" value="C:cytoplasm"/>
    <property type="evidence" value="ECO:0007669"/>
    <property type="project" value="UniProtKB-SubCell"/>
</dbReference>
<dbReference type="GO" id="GO:0005886">
    <property type="term" value="C:plasma membrane"/>
    <property type="evidence" value="ECO:0007669"/>
    <property type="project" value="TreeGrafter"/>
</dbReference>
<dbReference type="GO" id="GO:0005524">
    <property type="term" value="F:ATP binding"/>
    <property type="evidence" value="ECO:0007669"/>
    <property type="project" value="UniProtKB-UniRule"/>
</dbReference>
<dbReference type="GO" id="GO:0016887">
    <property type="term" value="F:ATP hydrolysis activity"/>
    <property type="evidence" value="ECO:0007669"/>
    <property type="project" value="InterPro"/>
</dbReference>
<dbReference type="GO" id="GO:0003688">
    <property type="term" value="F:DNA replication origin binding"/>
    <property type="evidence" value="ECO:0007669"/>
    <property type="project" value="UniProtKB-UniRule"/>
</dbReference>
<dbReference type="GO" id="GO:0008289">
    <property type="term" value="F:lipid binding"/>
    <property type="evidence" value="ECO:0007669"/>
    <property type="project" value="UniProtKB-KW"/>
</dbReference>
<dbReference type="GO" id="GO:0006270">
    <property type="term" value="P:DNA replication initiation"/>
    <property type="evidence" value="ECO:0007669"/>
    <property type="project" value="UniProtKB-UniRule"/>
</dbReference>
<dbReference type="GO" id="GO:0006275">
    <property type="term" value="P:regulation of DNA replication"/>
    <property type="evidence" value="ECO:0007669"/>
    <property type="project" value="UniProtKB-UniRule"/>
</dbReference>
<dbReference type="CDD" id="cd00009">
    <property type="entry name" value="AAA"/>
    <property type="match status" value="1"/>
</dbReference>
<dbReference type="CDD" id="cd06571">
    <property type="entry name" value="Bac_DnaA_C"/>
    <property type="match status" value="1"/>
</dbReference>
<dbReference type="FunFam" id="1.10.1750.10:FF:000002">
    <property type="entry name" value="Chromosomal replication initiator protein DnaA"/>
    <property type="match status" value="1"/>
</dbReference>
<dbReference type="FunFam" id="3.40.50.300:FF:000668">
    <property type="entry name" value="Chromosomal replication initiator protein DnaA"/>
    <property type="match status" value="1"/>
</dbReference>
<dbReference type="Gene3D" id="1.10.1750.10">
    <property type="match status" value="1"/>
</dbReference>
<dbReference type="Gene3D" id="1.10.8.60">
    <property type="match status" value="1"/>
</dbReference>
<dbReference type="Gene3D" id="3.40.50.300">
    <property type="entry name" value="P-loop containing nucleotide triphosphate hydrolases"/>
    <property type="match status" value="1"/>
</dbReference>
<dbReference type="HAMAP" id="MF_00377">
    <property type="entry name" value="DnaA_bact"/>
    <property type="match status" value="1"/>
</dbReference>
<dbReference type="InterPro" id="IPR003593">
    <property type="entry name" value="AAA+_ATPase"/>
</dbReference>
<dbReference type="InterPro" id="IPR001957">
    <property type="entry name" value="Chromosome_initiator_DnaA"/>
</dbReference>
<dbReference type="InterPro" id="IPR020591">
    <property type="entry name" value="Chromosome_initiator_DnaA-like"/>
</dbReference>
<dbReference type="InterPro" id="IPR018312">
    <property type="entry name" value="Chromosome_initiator_DnaA_CS"/>
</dbReference>
<dbReference type="InterPro" id="IPR013159">
    <property type="entry name" value="DnaA_C"/>
</dbReference>
<dbReference type="InterPro" id="IPR013317">
    <property type="entry name" value="DnaA_dom"/>
</dbReference>
<dbReference type="InterPro" id="IPR027417">
    <property type="entry name" value="P-loop_NTPase"/>
</dbReference>
<dbReference type="InterPro" id="IPR010921">
    <property type="entry name" value="Trp_repressor/repl_initiator"/>
</dbReference>
<dbReference type="NCBIfam" id="TIGR00362">
    <property type="entry name" value="DnaA"/>
    <property type="match status" value="1"/>
</dbReference>
<dbReference type="PANTHER" id="PTHR30050">
    <property type="entry name" value="CHROMOSOMAL REPLICATION INITIATOR PROTEIN DNAA"/>
    <property type="match status" value="1"/>
</dbReference>
<dbReference type="PANTHER" id="PTHR30050:SF2">
    <property type="entry name" value="CHROMOSOMAL REPLICATION INITIATOR PROTEIN DNAA"/>
    <property type="match status" value="1"/>
</dbReference>
<dbReference type="Pfam" id="PF00308">
    <property type="entry name" value="Bac_DnaA"/>
    <property type="match status" value="1"/>
</dbReference>
<dbReference type="Pfam" id="PF08299">
    <property type="entry name" value="Bac_DnaA_C"/>
    <property type="match status" value="1"/>
</dbReference>
<dbReference type="PRINTS" id="PR00051">
    <property type="entry name" value="DNAA"/>
</dbReference>
<dbReference type="SMART" id="SM00382">
    <property type="entry name" value="AAA"/>
    <property type="match status" value="1"/>
</dbReference>
<dbReference type="SMART" id="SM00760">
    <property type="entry name" value="Bac_DnaA_C"/>
    <property type="match status" value="1"/>
</dbReference>
<dbReference type="SUPFAM" id="SSF52540">
    <property type="entry name" value="P-loop containing nucleoside triphosphate hydrolases"/>
    <property type="match status" value="1"/>
</dbReference>
<dbReference type="SUPFAM" id="SSF48295">
    <property type="entry name" value="TrpR-like"/>
    <property type="match status" value="1"/>
</dbReference>
<dbReference type="PROSITE" id="PS01008">
    <property type="entry name" value="DNAA"/>
    <property type="match status" value="1"/>
</dbReference>
<name>DNAA_STRPD</name>
<gene>
    <name evidence="1" type="primary">dnaA</name>
    <name type="ordered locus">MGAS10270_Spy0001</name>
</gene>
<sequence length="451" mass="51665">MTENEQIFWNRVLELAQSQLKQATYEFFVHDARLLKVDKHIATIYLDQMKELFWEKNLKDVILTAGFEVYNAQISVDYVFEEDLMIEQNQTKINQKPKQQALNSLPTVTSDLNSKYSFENFIQGDENRWAVAASIAVANTPGTTYNPLFIWGGPGLGKTHLLNAIGNSVLLENPNARIKYITAENFINEFVIHIRLDTMDELKEKFRNLDLLLIDDIQSLAKKTLSGTQEEFFNTFNALHNNNKQIVLTSDRTPDHLNDLEDRLVTRFKWGLTVNITPPDFETRVAILTNKIQEYNFIFPQDTIEYLAGQFDSNVRDLEGALKDISLVANFKQIDTITVDIAAEAIRARKQDGPKMTVIPIEEIQAQVGKFYGVTVKEIKATKRTQNIVLARQVAMFLAREMTDNSLPKIGKEFGGRDHSTVLHAYNKIKNMISQDESLRIEIETIKNKIK</sequence>
<evidence type="ECO:0000255" key="1">
    <source>
        <dbReference type="HAMAP-Rule" id="MF_00377"/>
    </source>
</evidence>
<comment type="function">
    <text evidence="1">Plays an essential role in the initiation and regulation of chromosomal replication. ATP-DnaA binds to the origin of replication (oriC) to initiate formation of the DNA replication initiation complex once per cell cycle. Binds the DnaA box (a 9 base pair repeat at the origin) and separates the double-stranded (ds)DNA. Forms a right-handed helical filament on oriC DNA; dsDNA binds to the exterior of the filament while single-stranded (ss)DNA is stabiized in the filament's interior. The ATP-DnaA-oriC complex binds and stabilizes one strand of the AT-rich DNA unwinding element (DUE), permitting loading of DNA polymerase. After initiation quickly degrades to an ADP-DnaA complex that is not apt for DNA replication. Binds acidic phospholipids.</text>
</comment>
<comment type="subunit">
    <text evidence="1">Oligomerizes as a right-handed, spiral filament on DNA at oriC.</text>
</comment>
<comment type="subcellular location">
    <subcellularLocation>
        <location evidence="1">Cytoplasm</location>
    </subcellularLocation>
</comment>
<comment type="domain">
    <text evidence="1">Domain I is involved in oligomerization and binding regulators, domain II is flexibile and of varying length in different bacteria, domain III forms the AAA+ region, while domain IV binds dsDNA.</text>
</comment>
<comment type="similarity">
    <text evidence="1">Belongs to the DnaA family.</text>
</comment>